<organism>
    <name type="scientific">Limosilactobacillus reuteri (strain DSM 20016)</name>
    <name type="common">Lactobacillus reuteri</name>
    <dbReference type="NCBI Taxonomy" id="557436"/>
    <lineage>
        <taxon>Bacteria</taxon>
        <taxon>Bacillati</taxon>
        <taxon>Bacillota</taxon>
        <taxon>Bacilli</taxon>
        <taxon>Lactobacillales</taxon>
        <taxon>Lactobacillaceae</taxon>
        <taxon>Limosilactobacillus</taxon>
    </lineage>
</organism>
<feature type="chain" id="PRO_1000187154" description="D-ribose pyranase">
    <location>
        <begin position="1"/>
        <end position="131"/>
    </location>
</feature>
<feature type="active site" description="Proton donor" evidence="1">
    <location>
        <position position="20"/>
    </location>
</feature>
<feature type="binding site" evidence="1">
    <location>
        <position position="28"/>
    </location>
    <ligand>
        <name>substrate</name>
    </ligand>
</feature>
<feature type="binding site" evidence="1">
    <location>
        <position position="98"/>
    </location>
    <ligand>
        <name>substrate</name>
    </ligand>
</feature>
<feature type="binding site" evidence="1">
    <location>
        <begin position="120"/>
        <end position="122"/>
    </location>
    <ligand>
        <name>substrate</name>
    </ligand>
</feature>
<evidence type="ECO:0000255" key="1">
    <source>
        <dbReference type="HAMAP-Rule" id="MF_01661"/>
    </source>
</evidence>
<proteinExistence type="inferred from homology"/>
<gene>
    <name evidence="1" type="primary">rbsD</name>
    <name type="ordered locus">Lreu_0405</name>
</gene>
<reference key="1">
    <citation type="journal article" date="2011" name="PLoS Genet.">
        <title>The evolution of host specialization in the vertebrate gut symbiont Lactobacillus reuteri.</title>
        <authorList>
            <person name="Frese S.A."/>
            <person name="Benson A.K."/>
            <person name="Tannock G.W."/>
            <person name="Loach D.M."/>
            <person name="Kim J."/>
            <person name="Zhang M."/>
            <person name="Oh P.L."/>
            <person name="Heng N.C."/>
            <person name="Patil P.B."/>
            <person name="Juge N."/>
            <person name="Mackenzie D.A."/>
            <person name="Pearson B.M."/>
            <person name="Lapidus A."/>
            <person name="Dalin E."/>
            <person name="Tice H."/>
            <person name="Goltsman E."/>
            <person name="Land M."/>
            <person name="Hauser L."/>
            <person name="Ivanova N."/>
            <person name="Kyrpides N.C."/>
            <person name="Walter J."/>
        </authorList>
    </citation>
    <scope>NUCLEOTIDE SEQUENCE [LARGE SCALE GENOMIC DNA]</scope>
    <source>
        <strain>DSM 20016</strain>
    </source>
</reference>
<sequence length="131" mass="14548">MKKTGIINSEVSAVVANMGHMDWLSIGDAGMPVPFGTKKIDLAVDKELPSFMDVLNNVLKEMKVQKIYLAEEIKDQNPAQLENIKKALPDVEVAFMPHSELKKSLTKTHAFIRTGEMTPYSNIILESGVTF</sequence>
<protein>
    <recommendedName>
        <fullName evidence="1">D-ribose pyranase</fullName>
        <ecNumber evidence="1">5.4.99.62</ecNumber>
    </recommendedName>
</protein>
<name>RBSD_LIMRD</name>
<dbReference type="EC" id="5.4.99.62" evidence="1"/>
<dbReference type="EMBL" id="CP000705">
    <property type="protein sequence ID" value="ABQ82674.1"/>
    <property type="molecule type" value="Genomic_DNA"/>
</dbReference>
<dbReference type="RefSeq" id="WP_003667492.1">
    <property type="nucleotide sequence ID" value="NC_009513.1"/>
</dbReference>
<dbReference type="SMR" id="A5VIK0"/>
<dbReference type="STRING" id="557436.Lreu_0405"/>
<dbReference type="KEGG" id="lre:Lreu_0405"/>
<dbReference type="PATRIC" id="fig|557436.17.peg.817"/>
<dbReference type="eggNOG" id="COG1869">
    <property type="taxonomic scope" value="Bacteria"/>
</dbReference>
<dbReference type="HOGENOM" id="CLU_135498_0_0_9"/>
<dbReference type="OMA" id="EQTPYAN"/>
<dbReference type="UniPathway" id="UPA00916">
    <property type="reaction ID" value="UER00888"/>
</dbReference>
<dbReference type="Proteomes" id="UP000001991">
    <property type="component" value="Chromosome"/>
</dbReference>
<dbReference type="GO" id="GO:0005829">
    <property type="term" value="C:cytosol"/>
    <property type="evidence" value="ECO:0007669"/>
    <property type="project" value="TreeGrafter"/>
</dbReference>
<dbReference type="GO" id="GO:0062193">
    <property type="term" value="F:D-ribose pyranase activity"/>
    <property type="evidence" value="ECO:0007669"/>
    <property type="project" value="UniProtKB-EC"/>
</dbReference>
<dbReference type="GO" id="GO:0016872">
    <property type="term" value="F:intramolecular lyase activity"/>
    <property type="evidence" value="ECO:0007669"/>
    <property type="project" value="UniProtKB-UniRule"/>
</dbReference>
<dbReference type="GO" id="GO:0048029">
    <property type="term" value="F:monosaccharide binding"/>
    <property type="evidence" value="ECO:0007669"/>
    <property type="project" value="InterPro"/>
</dbReference>
<dbReference type="GO" id="GO:0019303">
    <property type="term" value="P:D-ribose catabolic process"/>
    <property type="evidence" value="ECO:0007669"/>
    <property type="project" value="UniProtKB-UniRule"/>
</dbReference>
<dbReference type="FunFam" id="3.40.1650.10:FF:000004">
    <property type="entry name" value="D-ribose pyranase"/>
    <property type="match status" value="1"/>
</dbReference>
<dbReference type="Gene3D" id="3.40.1650.10">
    <property type="entry name" value="RbsD-like domain"/>
    <property type="match status" value="1"/>
</dbReference>
<dbReference type="HAMAP" id="MF_01661">
    <property type="entry name" value="D_rib_pyranase"/>
    <property type="match status" value="1"/>
</dbReference>
<dbReference type="InterPro" id="IPR023064">
    <property type="entry name" value="D-ribose_pyranase"/>
</dbReference>
<dbReference type="InterPro" id="IPR023750">
    <property type="entry name" value="RbsD-like_sf"/>
</dbReference>
<dbReference type="InterPro" id="IPR007721">
    <property type="entry name" value="RbsD_FucU"/>
</dbReference>
<dbReference type="NCBIfam" id="NF008761">
    <property type="entry name" value="PRK11797.1"/>
    <property type="match status" value="1"/>
</dbReference>
<dbReference type="PANTHER" id="PTHR37831">
    <property type="entry name" value="D-RIBOSE PYRANASE"/>
    <property type="match status" value="1"/>
</dbReference>
<dbReference type="PANTHER" id="PTHR37831:SF1">
    <property type="entry name" value="D-RIBOSE PYRANASE"/>
    <property type="match status" value="1"/>
</dbReference>
<dbReference type="Pfam" id="PF05025">
    <property type="entry name" value="RbsD_FucU"/>
    <property type="match status" value="1"/>
</dbReference>
<dbReference type="SUPFAM" id="SSF102546">
    <property type="entry name" value="RbsD-like"/>
    <property type="match status" value="1"/>
</dbReference>
<comment type="function">
    <text evidence="1">Catalyzes the interconversion of beta-pyran and beta-furan forms of D-ribose.</text>
</comment>
<comment type="catalytic activity">
    <reaction evidence="1">
        <text>beta-D-ribopyranose = beta-D-ribofuranose</text>
        <dbReference type="Rhea" id="RHEA:25432"/>
        <dbReference type="ChEBI" id="CHEBI:27476"/>
        <dbReference type="ChEBI" id="CHEBI:47002"/>
        <dbReference type="EC" id="5.4.99.62"/>
    </reaction>
</comment>
<comment type="pathway">
    <text evidence="1">Carbohydrate metabolism; D-ribose degradation; D-ribose 5-phosphate from beta-D-ribopyranose: step 1/2.</text>
</comment>
<comment type="subunit">
    <text evidence="1">Homodecamer.</text>
</comment>
<comment type="subcellular location">
    <subcellularLocation>
        <location evidence="1">Cytoplasm</location>
    </subcellularLocation>
</comment>
<comment type="similarity">
    <text evidence="1">Belongs to the RbsD / FucU family. RbsD subfamily.</text>
</comment>
<keyword id="KW-0119">Carbohydrate metabolism</keyword>
<keyword id="KW-0963">Cytoplasm</keyword>
<keyword id="KW-0413">Isomerase</keyword>
<keyword id="KW-1185">Reference proteome</keyword>
<accession>A5VIK0</accession>